<keyword id="KW-0378">Hydrolase</keyword>
<keyword id="KW-0460">Magnesium</keyword>
<keyword id="KW-0479">Metal-binding</keyword>
<keyword id="KW-0546">Nucleotide metabolism</keyword>
<comment type="function">
    <text evidence="1">This enzyme is involved in nucleotide metabolism: it produces dUMP, the immediate precursor of thymidine nucleotides and it decreases the intracellular concentration of dUTP so that uracil cannot be incorporated into DNA.</text>
</comment>
<comment type="catalytic activity">
    <reaction evidence="1">
        <text>dUTP + H2O = dUMP + diphosphate + H(+)</text>
        <dbReference type="Rhea" id="RHEA:10248"/>
        <dbReference type="ChEBI" id="CHEBI:15377"/>
        <dbReference type="ChEBI" id="CHEBI:15378"/>
        <dbReference type="ChEBI" id="CHEBI:33019"/>
        <dbReference type="ChEBI" id="CHEBI:61555"/>
        <dbReference type="ChEBI" id="CHEBI:246422"/>
        <dbReference type="EC" id="3.6.1.23"/>
    </reaction>
</comment>
<comment type="cofactor">
    <cofactor evidence="1">
        <name>Mg(2+)</name>
        <dbReference type="ChEBI" id="CHEBI:18420"/>
    </cofactor>
</comment>
<comment type="pathway">
    <text evidence="1">Pyrimidine metabolism; dUMP biosynthesis; dUMP from dCTP (dUTP route): step 2/2.</text>
</comment>
<comment type="similarity">
    <text evidence="1">Belongs to the dUTPase family.</text>
</comment>
<name>DUT_NEIMA</name>
<protein>
    <recommendedName>
        <fullName evidence="1">Deoxyuridine 5'-triphosphate nucleotidohydrolase</fullName>
        <shortName evidence="1">dUTPase</shortName>
        <ecNumber evidence="1">3.6.1.23</ecNumber>
    </recommendedName>
    <alternativeName>
        <fullName evidence="1">dUTP pyrophosphatase</fullName>
    </alternativeName>
</protein>
<evidence type="ECO:0000255" key="1">
    <source>
        <dbReference type="HAMAP-Rule" id="MF_00116"/>
    </source>
</evidence>
<proteinExistence type="inferred from homology"/>
<feature type="chain" id="PRO_0000182885" description="Deoxyuridine 5'-triphosphate nucleotidohydrolase">
    <location>
        <begin position="1"/>
        <end position="150"/>
    </location>
</feature>
<feature type="binding site" evidence="1">
    <location>
        <begin position="69"/>
        <end position="71"/>
    </location>
    <ligand>
        <name>substrate</name>
    </ligand>
</feature>
<feature type="binding site" evidence="1">
    <location>
        <position position="82"/>
    </location>
    <ligand>
        <name>substrate</name>
    </ligand>
</feature>
<feature type="binding site" evidence="1">
    <location>
        <begin position="86"/>
        <end position="88"/>
    </location>
    <ligand>
        <name>substrate</name>
    </ligand>
</feature>
<feature type="binding site" evidence="1">
    <location>
        <position position="96"/>
    </location>
    <ligand>
        <name>substrate</name>
    </ligand>
</feature>
<reference key="1">
    <citation type="journal article" date="2000" name="Nature">
        <title>Complete DNA sequence of a serogroup A strain of Neisseria meningitidis Z2491.</title>
        <authorList>
            <person name="Parkhill J."/>
            <person name="Achtman M."/>
            <person name="James K.D."/>
            <person name="Bentley S.D."/>
            <person name="Churcher C.M."/>
            <person name="Klee S.R."/>
            <person name="Morelli G."/>
            <person name="Basham D."/>
            <person name="Brown D."/>
            <person name="Chillingworth T."/>
            <person name="Davies R.M."/>
            <person name="Davis P."/>
            <person name="Devlin K."/>
            <person name="Feltwell T."/>
            <person name="Hamlin N."/>
            <person name="Holroyd S."/>
            <person name="Jagels K."/>
            <person name="Leather S."/>
            <person name="Moule S."/>
            <person name="Mungall K.L."/>
            <person name="Quail M.A."/>
            <person name="Rajandream M.A."/>
            <person name="Rutherford K.M."/>
            <person name="Simmonds M."/>
            <person name="Skelton J."/>
            <person name="Whitehead S."/>
            <person name="Spratt B.G."/>
            <person name="Barrell B.G."/>
        </authorList>
    </citation>
    <scope>NUCLEOTIDE SEQUENCE [LARGE SCALE GENOMIC DNA]</scope>
    <source>
        <strain>DSM 15465 / Z2491</strain>
    </source>
</reference>
<dbReference type="EC" id="3.6.1.23" evidence="1"/>
<dbReference type="EMBL" id="AL157959">
    <property type="protein sequence ID" value="CAM08321.1"/>
    <property type="molecule type" value="Genomic_DNA"/>
</dbReference>
<dbReference type="PIR" id="D81877">
    <property type="entry name" value="D81877"/>
</dbReference>
<dbReference type="RefSeq" id="WP_002226436.1">
    <property type="nucleotide sequence ID" value="NC_003116.1"/>
</dbReference>
<dbReference type="SMR" id="Q9JUW1"/>
<dbReference type="EnsemblBacteria" id="CAM08321">
    <property type="protein sequence ID" value="CAM08321"/>
    <property type="gene ID" value="NMA1112"/>
</dbReference>
<dbReference type="GeneID" id="93386278"/>
<dbReference type="KEGG" id="nma:NMA1112"/>
<dbReference type="HOGENOM" id="CLU_068508_1_1_4"/>
<dbReference type="UniPathway" id="UPA00610">
    <property type="reaction ID" value="UER00666"/>
</dbReference>
<dbReference type="Proteomes" id="UP000000626">
    <property type="component" value="Chromosome"/>
</dbReference>
<dbReference type="GO" id="GO:0004170">
    <property type="term" value="F:dUTP diphosphatase activity"/>
    <property type="evidence" value="ECO:0007669"/>
    <property type="project" value="UniProtKB-UniRule"/>
</dbReference>
<dbReference type="GO" id="GO:0000287">
    <property type="term" value="F:magnesium ion binding"/>
    <property type="evidence" value="ECO:0007669"/>
    <property type="project" value="UniProtKB-UniRule"/>
</dbReference>
<dbReference type="GO" id="GO:0006226">
    <property type="term" value="P:dUMP biosynthetic process"/>
    <property type="evidence" value="ECO:0007669"/>
    <property type="project" value="UniProtKB-UniRule"/>
</dbReference>
<dbReference type="GO" id="GO:0046081">
    <property type="term" value="P:dUTP catabolic process"/>
    <property type="evidence" value="ECO:0007669"/>
    <property type="project" value="InterPro"/>
</dbReference>
<dbReference type="CDD" id="cd07557">
    <property type="entry name" value="trimeric_dUTPase"/>
    <property type="match status" value="1"/>
</dbReference>
<dbReference type="FunFam" id="2.70.40.10:FF:000002">
    <property type="entry name" value="dUTP diphosphatase"/>
    <property type="match status" value="1"/>
</dbReference>
<dbReference type="Gene3D" id="2.70.40.10">
    <property type="match status" value="1"/>
</dbReference>
<dbReference type="HAMAP" id="MF_00116">
    <property type="entry name" value="dUTPase_bact"/>
    <property type="match status" value="1"/>
</dbReference>
<dbReference type="InterPro" id="IPR008181">
    <property type="entry name" value="dUTPase"/>
</dbReference>
<dbReference type="InterPro" id="IPR029054">
    <property type="entry name" value="dUTPase-like"/>
</dbReference>
<dbReference type="InterPro" id="IPR036157">
    <property type="entry name" value="dUTPase-like_sf"/>
</dbReference>
<dbReference type="InterPro" id="IPR033704">
    <property type="entry name" value="dUTPase_trimeric"/>
</dbReference>
<dbReference type="NCBIfam" id="TIGR00576">
    <property type="entry name" value="dut"/>
    <property type="match status" value="1"/>
</dbReference>
<dbReference type="NCBIfam" id="NF001862">
    <property type="entry name" value="PRK00601.1"/>
    <property type="match status" value="1"/>
</dbReference>
<dbReference type="PANTHER" id="PTHR11241">
    <property type="entry name" value="DEOXYURIDINE 5'-TRIPHOSPHATE NUCLEOTIDOHYDROLASE"/>
    <property type="match status" value="1"/>
</dbReference>
<dbReference type="PANTHER" id="PTHR11241:SF0">
    <property type="entry name" value="DEOXYURIDINE 5'-TRIPHOSPHATE NUCLEOTIDOHYDROLASE"/>
    <property type="match status" value="1"/>
</dbReference>
<dbReference type="Pfam" id="PF00692">
    <property type="entry name" value="dUTPase"/>
    <property type="match status" value="1"/>
</dbReference>
<dbReference type="SUPFAM" id="SSF51283">
    <property type="entry name" value="dUTPase-like"/>
    <property type="match status" value="1"/>
</dbReference>
<accession>Q9JUW1</accession>
<accession>A1IRD5</accession>
<gene>
    <name evidence="1" type="primary">dut</name>
    <name type="ordered locus">NMA1112</name>
</gene>
<organism>
    <name type="scientific">Neisseria meningitidis serogroup A / serotype 4A (strain DSM 15465 / Z2491)</name>
    <dbReference type="NCBI Taxonomy" id="122587"/>
    <lineage>
        <taxon>Bacteria</taxon>
        <taxon>Pseudomonadati</taxon>
        <taxon>Pseudomonadota</taxon>
        <taxon>Betaproteobacteria</taxon>
        <taxon>Neisseriales</taxon>
        <taxon>Neisseriaceae</taxon>
        <taxon>Neisseria</taxon>
    </lineage>
</organism>
<sequence length="150" mass="16285">MNIEVEMKVLDERMADVVPVYATKGSAGLDLRACLDEEVVLQPGETFLVPTGLAIYLADPSYAAVLLPRSGLGHKHGIVLGNLVGLIDSDYQGELKVSLWNRSSEPFTVKPFERIAQMVIVPIVQARFKRVEEFVGSSRGEGGFGSTGLH</sequence>